<evidence type="ECO:0000250" key="1"/>
<evidence type="ECO:0000255" key="2">
    <source>
        <dbReference type="HAMAP-Rule" id="MF_00100"/>
    </source>
</evidence>
<evidence type="ECO:0000256" key="3">
    <source>
        <dbReference type="SAM" id="MobiDB-lite"/>
    </source>
</evidence>
<comment type="function">
    <text evidence="2">One of the essential components for the initiation of protein synthesis. Protects formylmethionyl-tRNA from spontaneous hydrolysis and promotes its binding to the 30S ribosomal subunits. Also involved in the hydrolysis of GTP during the formation of the 70S ribosomal complex.</text>
</comment>
<comment type="subcellular location">
    <subcellularLocation>
        <location evidence="2">Cytoplasm</location>
    </subcellularLocation>
</comment>
<comment type="similarity">
    <text evidence="2">Belongs to the TRAFAC class translation factor GTPase superfamily. Classic translation factor GTPase family. IF-2 subfamily.</text>
</comment>
<keyword id="KW-0963">Cytoplasm</keyword>
<keyword id="KW-0342">GTP-binding</keyword>
<keyword id="KW-0396">Initiation factor</keyword>
<keyword id="KW-0547">Nucleotide-binding</keyword>
<keyword id="KW-0648">Protein biosynthesis</keyword>
<keyword id="KW-1185">Reference proteome</keyword>
<name>IF2_VIBCH</name>
<gene>
    <name evidence="2" type="primary">infB</name>
    <name type="ordered locus">VC_0643</name>
</gene>
<reference key="1">
    <citation type="journal article" date="2000" name="Nature">
        <title>DNA sequence of both chromosomes of the cholera pathogen Vibrio cholerae.</title>
        <authorList>
            <person name="Heidelberg J.F."/>
            <person name="Eisen J.A."/>
            <person name="Nelson W.C."/>
            <person name="Clayton R.A."/>
            <person name="Gwinn M.L."/>
            <person name="Dodson R.J."/>
            <person name="Haft D.H."/>
            <person name="Hickey E.K."/>
            <person name="Peterson J.D."/>
            <person name="Umayam L.A."/>
            <person name="Gill S.R."/>
            <person name="Nelson K.E."/>
            <person name="Read T.D."/>
            <person name="Tettelin H."/>
            <person name="Richardson D.L."/>
            <person name="Ermolaeva M.D."/>
            <person name="Vamathevan J.J."/>
            <person name="Bass S."/>
            <person name="Qin H."/>
            <person name="Dragoi I."/>
            <person name="Sellers P."/>
            <person name="McDonald L.A."/>
            <person name="Utterback T.R."/>
            <person name="Fleischmann R.D."/>
            <person name="Nierman W.C."/>
            <person name="White O."/>
            <person name="Salzberg S.L."/>
            <person name="Smith H.O."/>
            <person name="Colwell R.R."/>
            <person name="Mekalanos J.J."/>
            <person name="Venter J.C."/>
            <person name="Fraser C.M."/>
        </authorList>
    </citation>
    <scope>NUCLEOTIDE SEQUENCE [LARGE SCALE GENOMIC DNA]</scope>
    <source>
        <strain>ATCC 39315 / El Tor Inaba N16961</strain>
    </source>
</reference>
<feature type="chain" id="PRO_0000137279" description="Translation initiation factor IF-2">
    <location>
        <begin position="1"/>
        <end position="898"/>
    </location>
</feature>
<feature type="domain" description="tr-type G">
    <location>
        <begin position="397"/>
        <end position="566"/>
    </location>
</feature>
<feature type="region of interest" description="Disordered" evidence="3">
    <location>
        <begin position="51"/>
        <end position="302"/>
    </location>
</feature>
<feature type="region of interest" description="G1" evidence="1">
    <location>
        <begin position="406"/>
        <end position="413"/>
    </location>
</feature>
<feature type="region of interest" description="G2" evidence="1">
    <location>
        <begin position="431"/>
        <end position="435"/>
    </location>
</feature>
<feature type="region of interest" description="G3" evidence="1">
    <location>
        <begin position="452"/>
        <end position="455"/>
    </location>
</feature>
<feature type="region of interest" description="G4" evidence="1">
    <location>
        <begin position="506"/>
        <end position="509"/>
    </location>
</feature>
<feature type="region of interest" description="G5" evidence="1">
    <location>
        <begin position="542"/>
        <end position="544"/>
    </location>
</feature>
<feature type="compositionally biased region" description="Basic and acidic residues" evidence="3">
    <location>
        <begin position="100"/>
        <end position="164"/>
    </location>
</feature>
<feature type="compositionally biased region" description="Basic and acidic residues" evidence="3">
    <location>
        <begin position="171"/>
        <end position="230"/>
    </location>
</feature>
<feature type="compositionally biased region" description="Polar residues" evidence="3">
    <location>
        <begin position="234"/>
        <end position="245"/>
    </location>
</feature>
<feature type="compositionally biased region" description="Basic residues" evidence="3">
    <location>
        <begin position="263"/>
        <end position="273"/>
    </location>
</feature>
<feature type="compositionally biased region" description="Basic and acidic residues" evidence="3">
    <location>
        <begin position="274"/>
        <end position="286"/>
    </location>
</feature>
<feature type="compositionally biased region" description="Basic residues" evidence="3">
    <location>
        <begin position="287"/>
        <end position="297"/>
    </location>
</feature>
<feature type="binding site" evidence="2">
    <location>
        <begin position="406"/>
        <end position="413"/>
    </location>
    <ligand>
        <name>GTP</name>
        <dbReference type="ChEBI" id="CHEBI:37565"/>
    </ligand>
</feature>
<feature type="binding site" evidence="2">
    <location>
        <begin position="452"/>
        <end position="456"/>
    </location>
    <ligand>
        <name>GTP</name>
        <dbReference type="ChEBI" id="CHEBI:37565"/>
    </ligand>
</feature>
<feature type="binding site" evidence="2">
    <location>
        <begin position="506"/>
        <end position="509"/>
    </location>
    <ligand>
        <name>GTP</name>
        <dbReference type="ChEBI" id="CHEBI:37565"/>
    </ligand>
</feature>
<sequence>MTQITVKALSEEIGTPVDRLLEQLADAGMNKAVADHVSEDEKQKLLAHLRKEHGDATGSEPTRLTLQRKTRSTLSVNAGGGKSKNVQVEVRKKRTYVKRSSVEDEATREAEEAAMRAAEEQAKREAEEAAQRAAEEKAKREAEEAAKREAEAKRMAEEKAKRETQAATQPRSDEEKLKQEAARKEAEALKRRQEEEARRKAEEESRRQLEKVRELAEKNGERWSADKETVGDMQENTDYHVTTSRYAREAEDEADLHEEGARRRSTKANKRKMSSRDDNQERDSRPRGGKAGRKGRINKPMSMQHGFDKTAVVAKADVVVGETIVVSELAQKMSVKATEVIKVMMKMGAMATINQVIDQETAQLVAEEMGHKVVLRKENELEEAILSDRDDKFEEVSRAPVVTIMGHVDHGKTSTLDYIRRTHVASGEAGGITQHIGAYHVETPNGMITFLDTPGHAAFTAMRARGAQATDIVVLVVAADDGVMPQTVEAIQHAKAAGVPLIVAVNKIDKDTANPDNVKTELSQYNVMPEEWGGDNMFVHISAKQGTNIDGLLEAILLQAEVLELKAVKQGMASGVVIESRLDKGRGPVATVLVQSGTLRKGDIVLCGQEYGRVRAMRDEVGNEVEEAGPSIPVEILGLSGVPAAGDEATVVRDERKAREVANYRAGKFREVKLARQQKSKLENMFSNMTAGDVAELNIVLKADVQGSVEAIADSLTKLSTDEVKVNIVGSGVGGITETDAVLAAASNAIVVGFNVRADASARRMIEAENIDLRYYSIIYQLIDEVKQAMSGMLSPEFKQEIIGLAEVRDVFKSPKLGAIAGCMVTEGVIKRNAPIRVLRDNVVIYEGELESLRRFKDDVAEVKNGYECGIGVKNYNDVRVGDQIEVFETIEIQRTID</sequence>
<proteinExistence type="inferred from homology"/>
<accession>Q9KU80</accession>
<protein>
    <recommendedName>
        <fullName evidence="2">Translation initiation factor IF-2</fullName>
    </recommendedName>
</protein>
<organism>
    <name type="scientific">Vibrio cholerae serotype O1 (strain ATCC 39315 / El Tor Inaba N16961)</name>
    <dbReference type="NCBI Taxonomy" id="243277"/>
    <lineage>
        <taxon>Bacteria</taxon>
        <taxon>Pseudomonadati</taxon>
        <taxon>Pseudomonadota</taxon>
        <taxon>Gammaproteobacteria</taxon>
        <taxon>Vibrionales</taxon>
        <taxon>Vibrionaceae</taxon>
        <taxon>Vibrio</taxon>
    </lineage>
</organism>
<dbReference type="EMBL" id="AE003852">
    <property type="protein sequence ID" value="AAF93809.1"/>
    <property type="molecule type" value="Genomic_DNA"/>
</dbReference>
<dbReference type="PIR" id="A82298">
    <property type="entry name" value="A82298"/>
</dbReference>
<dbReference type="RefSeq" id="NP_230292.1">
    <property type="nucleotide sequence ID" value="NC_002505.1"/>
</dbReference>
<dbReference type="RefSeq" id="WP_000192207.1">
    <property type="nucleotide sequence ID" value="NZ_LT906614.1"/>
</dbReference>
<dbReference type="SMR" id="Q9KU80"/>
<dbReference type="STRING" id="243277.VC_0643"/>
<dbReference type="DNASU" id="2615433"/>
<dbReference type="EnsemblBacteria" id="AAF93809">
    <property type="protein sequence ID" value="AAF93809"/>
    <property type="gene ID" value="VC_0643"/>
</dbReference>
<dbReference type="GeneID" id="69720601"/>
<dbReference type="KEGG" id="vch:VC_0643"/>
<dbReference type="PATRIC" id="fig|243277.26.peg.613"/>
<dbReference type="eggNOG" id="COG0532">
    <property type="taxonomic scope" value="Bacteria"/>
</dbReference>
<dbReference type="HOGENOM" id="CLU_006301_6_3_6"/>
<dbReference type="Proteomes" id="UP000000584">
    <property type="component" value="Chromosome 1"/>
</dbReference>
<dbReference type="GO" id="GO:0005737">
    <property type="term" value="C:cytoplasm"/>
    <property type="evidence" value="ECO:0000318"/>
    <property type="project" value="GO_Central"/>
</dbReference>
<dbReference type="GO" id="GO:0005829">
    <property type="term" value="C:cytosol"/>
    <property type="evidence" value="ECO:0000318"/>
    <property type="project" value="GO_Central"/>
</dbReference>
<dbReference type="GO" id="GO:0005525">
    <property type="term" value="F:GTP binding"/>
    <property type="evidence" value="ECO:0007669"/>
    <property type="project" value="UniProtKB-KW"/>
</dbReference>
<dbReference type="GO" id="GO:0003924">
    <property type="term" value="F:GTPase activity"/>
    <property type="evidence" value="ECO:0007669"/>
    <property type="project" value="UniProtKB-UniRule"/>
</dbReference>
<dbReference type="GO" id="GO:0097216">
    <property type="term" value="F:guanosine tetraphosphate binding"/>
    <property type="evidence" value="ECO:0007669"/>
    <property type="project" value="UniProtKB-ARBA"/>
</dbReference>
<dbReference type="GO" id="GO:0003743">
    <property type="term" value="F:translation initiation factor activity"/>
    <property type="evidence" value="ECO:0000318"/>
    <property type="project" value="GO_Central"/>
</dbReference>
<dbReference type="GO" id="GO:0006413">
    <property type="term" value="P:translational initiation"/>
    <property type="evidence" value="ECO:0000318"/>
    <property type="project" value="GO_Central"/>
</dbReference>
<dbReference type="CDD" id="cd01887">
    <property type="entry name" value="IF2_eIF5B"/>
    <property type="match status" value="1"/>
</dbReference>
<dbReference type="CDD" id="cd03702">
    <property type="entry name" value="IF2_mtIF2_II"/>
    <property type="match status" value="1"/>
</dbReference>
<dbReference type="CDD" id="cd03692">
    <property type="entry name" value="mtIF2_IVc"/>
    <property type="match status" value="1"/>
</dbReference>
<dbReference type="FunFam" id="2.40.30.10:FF:000007">
    <property type="entry name" value="Translation initiation factor IF-2"/>
    <property type="match status" value="1"/>
</dbReference>
<dbReference type="FunFam" id="2.40.30.10:FF:000008">
    <property type="entry name" value="Translation initiation factor IF-2"/>
    <property type="match status" value="1"/>
</dbReference>
<dbReference type="FunFam" id="3.40.50.10050:FF:000001">
    <property type="entry name" value="Translation initiation factor IF-2"/>
    <property type="match status" value="1"/>
</dbReference>
<dbReference type="FunFam" id="3.40.50.300:FF:000019">
    <property type="entry name" value="Translation initiation factor IF-2"/>
    <property type="match status" value="1"/>
</dbReference>
<dbReference type="Gene3D" id="3.40.50.300">
    <property type="entry name" value="P-loop containing nucleotide triphosphate hydrolases"/>
    <property type="match status" value="1"/>
</dbReference>
<dbReference type="Gene3D" id="3.30.56.50">
    <property type="entry name" value="Putative DNA-binding domain, N-terminal subdomain of bacterial translation initiation factor IF2"/>
    <property type="match status" value="1"/>
</dbReference>
<dbReference type="Gene3D" id="2.40.30.10">
    <property type="entry name" value="Translation factors"/>
    <property type="match status" value="2"/>
</dbReference>
<dbReference type="Gene3D" id="3.40.50.10050">
    <property type="entry name" value="Translation initiation factor IF- 2, domain 3"/>
    <property type="match status" value="1"/>
</dbReference>
<dbReference type="HAMAP" id="MF_00100_B">
    <property type="entry name" value="IF_2_B"/>
    <property type="match status" value="1"/>
</dbReference>
<dbReference type="InterPro" id="IPR009061">
    <property type="entry name" value="DNA-bd_dom_put_sf"/>
</dbReference>
<dbReference type="InterPro" id="IPR053905">
    <property type="entry name" value="EF-G-like_DII"/>
</dbReference>
<dbReference type="InterPro" id="IPR004161">
    <property type="entry name" value="EFTu-like_2"/>
</dbReference>
<dbReference type="InterPro" id="IPR013575">
    <property type="entry name" value="IF2_assoc_dom_bac"/>
</dbReference>
<dbReference type="InterPro" id="IPR044145">
    <property type="entry name" value="IF2_II"/>
</dbReference>
<dbReference type="InterPro" id="IPR006847">
    <property type="entry name" value="IF2_N"/>
</dbReference>
<dbReference type="InterPro" id="IPR027417">
    <property type="entry name" value="P-loop_NTPase"/>
</dbReference>
<dbReference type="InterPro" id="IPR005225">
    <property type="entry name" value="Small_GTP-bd"/>
</dbReference>
<dbReference type="InterPro" id="IPR000795">
    <property type="entry name" value="T_Tr_GTP-bd_dom"/>
</dbReference>
<dbReference type="InterPro" id="IPR000178">
    <property type="entry name" value="TF_IF2_bacterial-like"/>
</dbReference>
<dbReference type="InterPro" id="IPR015760">
    <property type="entry name" value="TIF_IF2"/>
</dbReference>
<dbReference type="InterPro" id="IPR023115">
    <property type="entry name" value="TIF_IF2_dom3"/>
</dbReference>
<dbReference type="InterPro" id="IPR036925">
    <property type="entry name" value="TIF_IF2_dom3_sf"/>
</dbReference>
<dbReference type="InterPro" id="IPR009000">
    <property type="entry name" value="Transl_B-barrel_sf"/>
</dbReference>
<dbReference type="NCBIfam" id="TIGR00487">
    <property type="entry name" value="IF-2"/>
    <property type="match status" value="1"/>
</dbReference>
<dbReference type="NCBIfam" id="TIGR00231">
    <property type="entry name" value="small_GTP"/>
    <property type="match status" value="1"/>
</dbReference>
<dbReference type="PANTHER" id="PTHR43381:SF5">
    <property type="entry name" value="TR-TYPE G DOMAIN-CONTAINING PROTEIN"/>
    <property type="match status" value="1"/>
</dbReference>
<dbReference type="PANTHER" id="PTHR43381">
    <property type="entry name" value="TRANSLATION INITIATION FACTOR IF-2-RELATED"/>
    <property type="match status" value="1"/>
</dbReference>
<dbReference type="Pfam" id="PF22042">
    <property type="entry name" value="EF-G_D2"/>
    <property type="match status" value="1"/>
</dbReference>
<dbReference type="Pfam" id="PF00009">
    <property type="entry name" value="GTP_EFTU"/>
    <property type="match status" value="1"/>
</dbReference>
<dbReference type="Pfam" id="PF03144">
    <property type="entry name" value="GTP_EFTU_D2"/>
    <property type="match status" value="1"/>
</dbReference>
<dbReference type="Pfam" id="PF11987">
    <property type="entry name" value="IF-2"/>
    <property type="match status" value="1"/>
</dbReference>
<dbReference type="Pfam" id="PF08364">
    <property type="entry name" value="IF2_assoc"/>
    <property type="match status" value="1"/>
</dbReference>
<dbReference type="Pfam" id="PF04760">
    <property type="entry name" value="IF2_N"/>
    <property type="match status" value="2"/>
</dbReference>
<dbReference type="SUPFAM" id="SSF52156">
    <property type="entry name" value="Initiation factor IF2/eIF5b, domain 3"/>
    <property type="match status" value="1"/>
</dbReference>
<dbReference type="SUPFAM" id="SSF52540">
    <property type="entry name" value="P-loop containing nucleoside triphosphate hydrolases"/>
    <property type="match status" value="1"/>
</dbReference>
<dbReference type="SUPFAM" id="SSF46955">
    <property type="entry name" value="Putative DNA-binding domain"/>
    <property type="match status" value="1"/>
</dbReference>
<dbReference type="SUPFAM" id="SSF50447">
    <property type="entry name" value="Translation proteins"/>
    <property type="match status" value="2"/>
</dbReference>
<dbReference type="PROSITE" id="PS51722">
    <property type="entry name" value="G_TR_2"/>
    <property type="match status" value="1"/>
</dbReference>
<dbReference type="PROSITE" id="PS01176">
    <property type="entry name" value="IF2"/>
    <property type="match status" value="1"/>
</dbReference>